<sequence>MKRTNYAGNITEEYLNQTITVKGWVAKRRNLGGLIFIDLRDREGIVQIVVNPETAATEVAEAADKARNEFVLEVTGKVVERASKNDKIKTGGIEIEATAIEILSTSKTTPFEIKDDVEVLDDTRLKYRYLDLRRPEMLKNITMRHATTRSIREYLDGAGFIDVETPFLNKSTPEGARDYLVPSRVNKGEFYALPQSPQLMKQLLMTAGLDRYYQIVKCFRDEDLRGDRQPEFTQVDLETSFLGEEEIQELTEELIAKVMKDVKGIDVTLPFPRMNYDDAMNFYGSDKPDTRFELLLTDLSALAKTVDFKVFQEAEVVKAIVVKGAADKYSRKSIDKLTEQAKQNGAKGLAWVKFEKGEFAGGVSKFLAESTDSFVNELKLTDNDLVLFVADSLDVANSALGALRLTIGKQQGLIDFRKFNFLWVIDWPMFEWSDEEERYMSAHHPFTLPTKETQAFLSADGHRKDSDLKKVRAHAYDIVLNGYELGGGSLRINSRDLQEEMLSALGFKLEDANEQFGFLLEALDYGFPPHGGLALGLDRFVMLLAGKDNIREVIAFPKNNKASDPMTQAPSIVADKQLEELSIKLANKDQ</sequence>
<evidence type="ECO:0000255" key="1">
    <source>
        <dbReference type="HAMAP-Rule" id="MF_00044"/>
    </source>
</evidence>
<organism>
    <name type="scientific">Lactococcus lactis subsp. cremoris (strain MG1363)</name>
    <dbReference type="NCBI Taxonomy" id="416870"/>
    <lineage>
        <taxon>Bacteria</taxon>
        <taxon>Bacillati</taxon>
        <taxon>Bacillota</taxon>
        <taxon>Bacilli</taxon>
        <taxon>Lactobacillales</taxon>
        <taxon>Streptococcaceae</taxon>
        <taxon>Lactococcus</taxon>
        <taxon>Lactococcus cremoris subsp. cremoris</taxon>
    </lineage>
</organism>
<accession>A2RN94</accession>
<proteinExistence type="inferred from homology"/>
<dbReference type="EC" id="6.1.1.12" evidence="1"/>
<dbReference type="EMBL" id="AM406671">
    <property type="protein sequence ID" value="CAL98782.1"/>
    <property type="molecule type" value="Genomic_DNA"/>
</dbReference>
<dbReference type="RefSeq" id="WP_011835906.1">
    <property type="nucleotide sequence ID" value="NC_009004.1"/>
</dbReference>
<dbReference type="SMR" id="A2RN94"/>
<dbReference type="STRING" id="416870.llmg_2215"/>
<dbReference type="KEGG" id="llm:llmg_2215"/>
<dbReference type="eggNOG" id="COG0173">
    <property type="taxonomic scope" value="Bacteria"/>
</dbReference>
<dbReference type="HOGENOM" id="CLU_014330_3_2_9"/>
<dbReference type="OrthoDB" id="9802326at2"/>
<dbReference type="PhylomeDB" id="A2RN94"/>
<dbReference type="Proteomes" id="UP000000364">
    <property type="component" value="Chromosome"/>
</dbReference>
<dbReference type="GO" id="GO:0005737">
    <property type="term" value="C:cytoplasm"/>
    <property type="evidence" value="ECO:0007669"/>
    <property type="project" value="UniProtKB-SubCell"/>
</dbReference>
<dbReference type="GO" id="GO:0004815">
    <property type="term" value="F:aspartate-tRNA ligase activity"/>
    <property type="evidence" value="ECO:0007669"/>
    <property type="project" value="UniProtKB-UniRule"/>
</dbReference>
<dbReference type="GO" id="GO:0005524">
    <property type="term" value="F:ATP binding"/>
    <property type="evidence" value="ECO:0007669"/>
    <property type="project" value="UniProtKB-UniRule"/>
</dbReference>
<dbReference type="GO" id="GO:0140096">
    <property type="term" value="F:catalytic activity, acting on a protein"/>
    <property type="evidence" value="ECO:0007669"/>
    <property type="project" value="UniProtKB-ARBA"/>
</dbReference>
<dbReference type="GO" id="GO:0003676">
    <property type="term" value="F:nucleic acid binding"/>
    <property type="evidence" value="ECO:0007669"/>
    <property type="project" value="InterPro"/>
</dbReference>
<dbReference type="GO" id="GO:0016740">
    <property type="term" value="F:transferase activity"/>
    <property type="evidence" value="ECO:0007669"/>
    <property type="project" value="UniProtKB-ARBA"/>
</dbReference>
<dbReference type="GO" id="GO:0006422">
    <property type="term" value="P:aspartyl-tRNA aminoacylation"/>
    <property type="evidence" value="ECO:0007669"/>
    <property type="project" value="UniProtKB-UniRule"/>
</dbReference>
<dbReference type="CDD" id="cd00777">
    <property type="entry name" value="AspRS_core"/>
    <property type="match status" value="1"/>
</dbReference>
<dbReference type="CDD" id="cd04317">
    <property type="entry name" value="EcAspRS_like_N"/>
    <property type="match status" value="1"/>
</dbReference>
<dbReference type="Gene3D" id="3.30.930.10">
    <property type="entry name" value="Bira Bifunctional Protein, Domain 2"/>
    <property type="match status" value="1"/>
</dbReference>
<dbReference type="Gene3D" id="3.30.1360.30">
    <property type="entry name" value="GAD-like domain"/>
    <property type="match status" value="1"/>
</dbReference>
<dbReference type="Gene3D" id="2.40.50.140">
    <property type="entry name" value="Nucleic acid-binding proteins"/>
    <property type="match status" value="1"/>
</dbReference>
<dbReference type="HAMAP" id="MF_00044">
    <property type="entry name" value="Asp_tRNA_synth_type1"/>
    <property type="match status" value="1"/>
</dbReference>
<dbReference type="InterPro" id="IPR004364">
    <property type="entry name" value="Aa-tRNA-synt_II"/>
</dbReference>
<dbReference type="InterPro" id="IPR006195">
    <property type="entry name" value="aa-tRNA-synth_II"/>
</dbReference>
<dbReference type="InterPro" id="IPR045864">
    <property type="entry name" value="aa-tRNA-synth_II/BPL/LPL"/>
</dbReference>
<dbReference type="InterPro" id="IPR004524">
    <property type="entry name" value="Asp-tRNA-ligase_1"/>
</dbReference>
<dbReference type="InterPro" id="IPR047089">
    <property type="entry name" value="Asp-tRNA-ligase_1_N"/>
</dbReference>
<dbReference type="InterPro" id="IPR002312">
    <property type="entry name" value="Asp/Asn-tRNA-synth_IIb"/>
</dbReference>
<dbReference type="InterPro" id="IPR047090">
    <property type="entry name" value="AspRS_core"/>
</dbReference>
<dbReference type="InterPro" id="IPR004115">
    <property type="entry name" value="GAD-like_sf"/>
</dbReference>
<dbReference type="InterPro" id="IPR029351">
    <property type="entry name" value="GAD_dom"/>
</dbReference>
<dbReference type="InterPro" id="IPR012340">
    <property type="entry name" value="NA-bd_OB-fold"/>
</dbReference>
<dbReference type="InterPro" id="IPR004365">
    <property type="entry name" value="NA-bd_OB_tRNA"/>
</dbReference>
<dbReference type="NCBIfam" id="TIGR00459">
    <property type="entry name" value="aspS_bact"/>
    <property type="match status" value="1"/>
</dbReference>
<dbReference type="NCBIfam" id="NF001750">
    <property type="entry name" value="PRK00476.1"/>
    <property type="match status" value="1"/>
</dbReference>
<dbReference type="PANTHER" id="PTHR22594:SF5">
    <property type="entry name" value="ASPARTATE--TRNA LIGASE, MITOCHONDRIAL"/>
    <property type="match status" value="1"/>
</dbReference>
<dbReference type="PANTHER" id="PTHR22594">
    <property type="entry name" value="ASPARTYL/LYSYL-TRNA SYNTHETASE"/>
    <property type="match status" value="1"/>
</dbReference>
<dbReference type="Pfam" id="PF02938">
    <property type="entry name" value="GAD"/>
    <property type="match status" value="1"/>
</dbReference>
<dbReference type="Pfam" id="PF00152">
    <property type="entry name" value="tRNA-synt_2"/>
    <property type="match status" value="1"/>
</dbReference>
<dbReference type="Pfam" id="PF01336">
    <property type="entry name" value="tRNA_anti-codon"/>
    <property type="match status" value="1"/>
</dbReference>
<dbReference type="PRINTS" id="PR01042">
    <property type="entry name" value="TRNASYNTHASP"/>
</dbReference>
<dbReference type="SUPFAM" id="SSF55681">
    <property type="entry name" value="Class II aaRS and biotin synthetases"/>
    <property type="match status" value="1"/>
</dbReference>
<dbReference type="SUPFAM" id="SSF55261">
    <property type="entry name" value="GAD domain-like"/>
    <property type="match status" value="1"/>
</dbReference>
<dbReference type="SUPFAM" id="SSF50249">
    <property type="entry name" value="Nucleic acid-binding proteins"/>
    <property type="match status" value="1"/>
</dbReference>
<dbReference type="PROSITE" id="PS50862">
    <property type="entry name" value="AA_TRNA_LIGASE_II"/>
    <property type="match status" value="1"/>
</dbReference>
<comment type="function">
    <text evidence="1">Catalyzes the attachment of L-aspartate to tRNA(Asp) in a two-step reaction: L-aspartate is first activated by ATP to form Asp-AMP and then transferred to the acceptor end of tRNA(Asp).</text>
</comment>
<comment type="catalytic activity">
    <reaction evidence="1">
        <text>tRNA(Asp) + L-aspartate + ATP = L-aspartyl-tRNA(Asp) + AMP + diphosphate</text>
        <dbReference type="Rhea" id="RHEA:19649"/>
        <dbReference type="Rhea" id="RHEA-COMP:9660"/>
        <dbReference type="Rhea" id="RHEA-COMP:9678"/>
        <dbReference type="ChEBI" id="CHEBI:29991"/>
        <dbReference type="ChEBI" id="CHEBI:30616"/>
        <dbReference type="ChEBI" id="CHEBI:33019"/>
        <dbReference type="ChEBI" id="CHEBI:78442"/>
        <dbReference type="ChEBI" id="CHEBI:78516"/>
        <dbReference type="ChEBI" id="CHEBI:456215"/>
        <dbReference type="EC" id="6.1.1.12"/>
    </reaction>
</comment>
<comment type="subunit">
    <text evidence="1">Homodimer.</text>
</comment>
<comment type="subcellular location">
    <subcellularLocation>
        <location evidence="1">Cytoplasm</location>
    </subcellularLocation>
</comment>
<comment type="similarity">
    <text evidence="1">Belongs to the class-II aminoacyl-tRNA synthetase family. Type 1 subfamily.</text>
</comment>
<name>SYD_LACLM</name>
<gene>
    <name evidence="1" type="primary">aspS</name>
    <name type="ordered locus">llmg_2215</name>
</gene>
<keyword id="KW-0030">Aminoacyl-tRNA synthetase</keyword>
<keyword id="KW-0067">ATP-binding</keyword>
<keyword id="KW-0963">Cytoplasm</keyword>
<keyword id="KW-0436">Ligase</keyword>
<keyword id="KW-0547">Nucleotide-binding</keyword>
<keyword id="KW-0648">Protein biosynthesis</keyword>
<reference key="1">
    <citation type="journal article" date="2007" name="J. Bacteriol.">
        <title>The complete genome sequence of the lactic acid bacterial paradigm Lactococcus lactis subsp. cremoris MG1363.</title>
        <authorList>
            <person name="Wegmann U."/>
            <person name="O'Connell-Motherway M."/>
            <person name="Zomer A."/>
            <person name="Buist G."/>
            <person name="Shearman C."/>
            <person name="Canchaya C."/>
            <person name="Ventura M."/>
            <person name="Goesmann A."/>
            <person name="Gasson M.J."/>
            <person name="Kuipers O.P."/>
            <person name="van Sinderen D."/>
            <person name="Kok J."/>
        </authorList>
    </citation>
    <scope>NUCLEOTIDE SEQUENCE [LARGE SCALE GENOMIC DNA]</scope>
    <source>
        <strain>MG1363</strain>
    </source>
</reference>
<feature type="chain" id="PRO_1000006691" description="Aspartate--tRNA ligase">
    <location>
        <begin position="1"/>
        <end position="590"/>
    </location>
</feature>
<feature type="region of interest" description="Aspartate" evidence="1">
    <location>
        <begin position="198"/>
        <end position="201"/>
    </location>
</feature>
<feature type="binding site" evidence="1">
    <location>
        <position position="174"/>
    </location>
    <ligand>
        <name>L-aspartate</name>
        <dbReference type="ChEBI" id="CHEBI:29991"/>
    </ligand>
</feature>
<feature type="binding site" evidence="1">
    <location>
        <begin position="220"/>
        <end position="222"/>
    </location>
    <ligand>
        <name>ATP</name>
        <dbReference type="ChEBI" id="CHEBI:30616"/>
    </ligand>
</feature>
<feature type="binding site" evidence="1">
    <location>
        <position position="220"/>
    </location>
    <ligand>
        <name>L-aspartate</name>
        <dbReference type="ChEBI" id="CHEBI:29991"/>
    </ligand>
</feature>
<feature type="binding site" evidence="1">
    <location>
        <position position="229"/>
    </location>
    <ligand>
        <name>ATP</name>
        <dbReference type="ChEBI" id="CHEBI:30616"/>
    </ligand>
</feature>
<feature type="binding site" evidence="1">
    <location>
        <position position="443"/>
    </location>
    <ligand>
        <name>L-aspartate</name>
        <dbReference type="ChEBI" id="CHEBI:29991"/>
    </ligand>
</feature>
<feature type="binding site" evidence="1">
    <location>
        <position position="484"/>
    </location>
    <ligand>
        <name>ATP</name>
        <dbReference type="ChEBI" id="CHEBI:30616"/>
    </ligand>
</feature>
<feature type="binding site" evidence="1">
    <location>
        <position position="491"/>
    </location>
    <ligand>
        <name>L-aspartate</name>
        <dbReference type="ChEBI" id="CHEBI:29991"/>
    </ligand>
</feature>
<feature type="binding site" evidence="1">
    <location>
        <begin position="536"/>
        <end position="539"/>
    </location>
    <ligand>
        <name>ATP</name>
        <dbReference type="ChEBI" id="CHEBI:30616"/>
    </ligand>
</feature>
<protein>
    <recommendedName>
        <fullName evidence="1">Aspartate--tRNA ligase</fullName>
        <ecNumber evidence="1">6.1.1.12</ecNumber>
    </recommendedName>
    <alternativeName>
        <fullName evidence="1">Aspartyl-tRNA synthetase</fullName>
        <shortName evidence="1">AspRS</shortName>
    </alternativeName>
</protein>